<comment type="catalytic activity">
    <reaction>
        <text>L-seryl-[protein] + ATP = O-phospho-L-seryl-[protein] + ADP + H(+)</text>
        <dbReference type="Rhea" id="RHEA:17989"/>
        <dbReference type="Rhea" id="RHEA-COMP:9863"/>
        <dbReference type="Rhea" id="RHEA-COMP:11604"/>
        <dbReference type="ChEBI" id="CHEBI:15378"/>
        <dbReference type="ChEBI" id="CHEBI:29999"/>
        <dbReference type="ChEBI" id="CHEBI:30616"/>
        <dbReference type="ChEBI" id="CHEBI:83421"/>
        <dbReference type="ChEBI" id="CHEBI:456216"/>
        <dbReference type="EC" id="2.7.11.22"/>
    </reaction>
</comment>
<comment type="catalytic activity">
    <reaction>
        <text>L-threonyl-[protein] + ATP = O-phospho-L-threonyl-[protein] + ADP + H(+)</text>
        <dbReference type="Rhea" id="RHEA:46608"/>
        <dbReference type="Rhea" id="RHEA-COMP:11060"/>
        <dbReference type="Rhea" id="RHEA-COMP:11605"/>
        <dbReference type="ChEBI" id="CHEBI:15378"/>
        <dbReference type="ChEBI" id="CHEBI:30013"/>
        <dbReference type="ChEBI" id="CHEBI:30616"/>
        <dbReference type="ChEBI" id="CHEBI:61977"/>
        <dbReference type="ChEBI" id="CHEBI:456216"/>
        <dbReference type="EC" id="2.7.11.22"/>
    </reaction>
</comment>
<comment type="catalytic activity">
    <reaction>
        <text>[DNA-directed RNA polymerase] + ATP = phospho-[DNA-directed RNA polymerase] + ADP + H(+)</text>
        <dbReference type="Rhea" id="RHEA:10216"/>
        <dbReference type="Rhea" id="RHEA-COMP:11321"/>
        <dbReference type="Rhea" id="RHEA-COMP:11322"/>
        <dbReference type="ChEBI" id="CHEBI:15378"/>
        <dbReference type="ChEBI" id="CHEBI:30616"/>
        <dbReference type="ChEBI" id="CHEBI:43176"/>
        <dbReference type="ChEBI" id="CHEBI:68546"/>
        <dbReference type="ChEBI" id="CHEBI:456216"/>
        <dbReference type="EC" id="2.7.11.23"/>
    </reaction>
</comment>
<comment type="interaction">
    <interactant intactId="EBI-1235761">
        <id>Q8LG64</id>
    </interactant>
    <interactant intactId="EBI-1235664">
        <id>P25854</id>
        <label>CAM4</label>
    </interactant>
    <organismsDiffer>false</organismsDiffer>
    <experiments>2</experiments>
</comment>
<comment type="interaction">
    <interactant intactId="EBI-1235761">
        <id>Q8LG64</id>
    </interactant>
    <interactant intactId="EBI-1236097">
        <id>Q03509</id>
        <label>CAM6</label>
    </interactant>
    <organismsDiffer>false</organismsDiffer>
    <experiments>2</experiments>
</comment>
<comment type="tissue specificity">
    <text evidence="5">Expressed in flowers.</text>
</comment>
<comment type="similarity">
    <text evidence="6">Belongs to the protein kinase superfamily. CMGC Ser/Thr protein kinase family. CDC2/CDKX subfamily.</text>
</comment>
<comment type="sequence caution" evidence="6">
    <conflict type="erroneous initiation">
        <sequence resource="EMBL-CDS" id="AAM61014"/>
    </conflict>
</comment>
<accession>Q8LG64</accession>
<accession>Q9SYP4</accession>
<feature type="chain" id="PRO_0000293116" description="Cyclin-dependent kinase B2-2">
    <location>
        <begin position="1"/>
        <end position="315"/>
    </location>
</feature>
<feature type="domain" description="Protein kinase" evidence="3">
    <location>
        <begin position="16"/>
        <end position="306"/>
    </location>
</feature>
<feature type="active site" description="Proton acceptor" evidence="3 4">
    <location>
        <position position="147"/>
    </location>
</feature>
<feature type="binding site" evidence="3">
    <location>
        <begin position="22"/>
        <end position="30"/>
    </location>
    <ligand>
        <name>ATP</name>
        <dbReference type="ChEBI" id="CHEBI:30616"/>
    </ligand>
</feature>
<feature type="binding site" evidence="3">
    <location>
        <position position="45"/>
    </location>
    <ligand>
        <name>ATP</name>
        <dbReference type="ChEBI" id="CHEBI:30616"/>
    </ligand>
</feature>
<feature type="modified residue" description="Phosphotyrosine" evidence="1">
    <location>
        <position position="27"/>
    </location>
</feature>
<feature type="modified residue" description="Phosphothreonine" evidence="2">
    <location>
        <position position="181"/>
    </location>
</feature>
<protein>
    <recommendedName>
        <fullName>Cyclin-dependent kinase B2-2</fullName>
        <shortName>CDKB2;2</shortName>
        <ecNumber>2.7.11.22</ecNumber>
        <ecNumber>2.7.11.23</ecNumber>
    </recommendedName>
</protein>
<gene>
    <name type="primary">CDKB2-2</name>
    <name type="ordered locus">At1g20930</name>
    <name type="ORF">F9H16.8</name>
</gene>
<dbReference type="EC" id="2.7.11.22"/>
<dbReference type="EC" id="2.7.11.23"/>
<dbReference type="EMBL" id="AC007369">
    <property type="protein sequence ID" value="AAD30597.1"/>
    <property type="molecule type" value="Genomic_DNA"/>
</dbReference>
<dbReference type="EMBL" id="CP002684">
    <property type="protein sequence ID" value="AEE30043.1"/>
    <property type="molecule type" value="Genomic_DNA"/>
</dbReference>
<dbReference type="EMBL" id="BT024780">
    <property type="protein sequence ID" value="ABD59118.1"/>
    <property type="molecule type" value="mRNA"/>
</dbReference>
<dbReference type="EMBL" id="AK229456">
    <property type="protein sequence ID" value="BAF01314.1"/>
    <property type="molecule type" value="mRNA"/>
</dbReference>
<dbReference type="EMBL" id="AY084441">
    <property type="protein sequence ID" value="AAM61014.1"/>
    <property type="status" value="ALT_INIT"/>
    <property type="molecule type" value="mRNA"/>
</dbReference>
<dbReference type="PIR" id="B86342">
    <property type="entry name" value="B86342"/>
</dbReference>
<dbReference type="SMR" id="Q8LG64"/>
<dbReference type="BioGRID" id="23926">
    <property type="interactions" value="25"/>
</dbReference>
<dbReference type="FunCoup" id="Q8LG64">
    <property type="interactions" value="428"/>
</dbReference>
<dbReference type="IntAct" id="Q8LG64">
    <property type="interactions" value="16"/>
</dbReference>
<dbReference type="STRING" id="3702.Q8LG64"/>
<dbReference type="iPTMnet" id="Q8LG64"/>
<dbReference type="PaxDb" id="3702-AT1G20930.1"/>
<dbReference type="ProteomicsDB" id="246810"/>
<dbReference type="EnsemblPlants" id="AT1G20930.1">
    <property type="protein sequence ID" value="AT1G20930.1"/>
    <property type="gene ID" value="AT1G20930"/>
</dbReference>
<dbReference type="GeneID" id="838687"/>
<dbReference type="Gramene" id="AT1G20930.1">
    <property type="protein sequence ID" value="AT1G20930.1"/>
    <property type="gene ID" value="AT1G20930"/>
</dbReference>
<dbReference type="KEGG" id="ath:AT1G20930"/>
<dbReference type="Araport" id="AT1G20930"/>
<dbReference type="TAIR" id="AT1G20930">
    <property type="gene designation" value="CDKB2"/>
</dbReference>
<dbReference type="eggNOG" id="KOG0594">
    <property type="taxonomic scope" value="Eukaryota"/>
</dbReference>
<dbReference type="HOGENOM" id="CLU_000288_181_6_1"/>
<dbReference type="InParanoid" id="Q8LG64"/>
<dbReference type="OMA" id="CFCHQRN"/>
<dbReference type="PhylomeDB" id="Q8LG64"/>
<dbReference type="PRO" id="PR:Q8LG64"/>
<dbReference type="Proteomes" id="UP000006548">
    <property type="component" value="Chromosome 1"/>
</dbReference>
<dbReference type="ExpressionAtlas" id="Q8LG64">
    <property type="expression patterns" value="baseline and differential"/>
</dbReference>
<dbReference type="GO" id="GO:0005829">
    <property type="term" value="C:cytosol"/>
    <property type="evidence" value="ECO:0007005"/>
    <property type="project" value="TAIR"/>
</dbReference>
<dbReference type="GO" id="GO:0005524">
    <property type="term" value="F:ATP binding"/>
    <property type="evidence" value="ECO:0007669"/>
    <property type="project" value="UniProtKB-KW"/>
</dbReference>
<dbReference type="GO" id="GO:0004693">
    <property type="term" value="F:cyclin-dependent protein serine/threonine kinase activity"/>
    <property type="evidence" value="ECO:0000304"/>
    <property type="project" value="TAIR"/>
</dbReference>
<dbReference type="GO" id="GO:0106310">
    <property type="term" value="F:protein serine kinase activity"/>
    <property type="evidence" value="ECO:0007669"/>
    <property type="project" value="RHEA"/>
</dbReference>
<dbReference type="GO" id="GO:0004674">
    <property type="term" value="F:protein serine/threonine kinase activity"/>
    <property type="evidence" value="ECO:0007005"/>
    <property type="project" value="TAIR"/>
</dbReference>
<dbReference type="GO" id="GO:0008353">
    <property type="term" value="F:RNA polymerase II CTD heptapeptide repeat kinase activity"/>
    <property type="evidence" value="ECO:0007669"/>
    <property type="project" value="UniProtKB-EC"/>
</dbReference>
<dbReference type="GO" id="GO:0009755">
    <property type="term" value="P:hormone-mediated signaling pathway"/>
    <property type="evidence" value="ECO:0000315"/>
    <property type="project" value="TAIR"/>
</dbReference>
<dbReference type="GO" id="GO:0046777">
    <property type="term" value="P:protein autophosphorylation"/>
    <property type="evidence" value="ECO:0007005"/>
    <property type="project" value="TAIR"/>
</dbReference>
<dbReference type="GO" id="GO:0010389">
    <property type="term" value="P:regulation of G2/M transition of mitotic cell cycle"/>
    <property type="evidence" value="ECO:0000315"/>
    <property type="project" value="TAIR"/>
</dbReference>
<dbReference type="GO" id="GO:0009934">
    <property type="term" value="P:regulation of meristem structural organization"/>
    <property type="evidence" value="ECO:0000315"/>
    <property type="project" value="TAIR"/>
</dbReference>
<dbReference type="GO" id="GO:0007346">
    <property type="term" value="P:regulation of mitotic cell cycle"/>
    <property type="evidence" value="ECO:0000304"/>
    <property type="project" value="TAIR"/>
</dbReference>
<dbReference type="FunFam" id="1.10.510.10:FF:000281">
    <property type="entry name" value="Cyclin-dependent kinase 2"/>
    <property type="match status" value="1"/>
</dbReference>
<dbReference type="FunFam" id="3.30.200.20:FF:000231">
    <property type="entry name" value="Cyclin-dependent kinase B2,2"/>
    <property type="match status" value="1"/>
</dbReference>
<dbReference type="Gene3D" id="3.30.200.20">
    <property type="entry name" value="Phosphorylase Kinase, domain 1"/>
    <property type="match status" value="1"/>
</dbReference>
<dbReference type="Gene3D" id="1.10.510.10">
    <property type="entry name" value="Transferase(Phosphotransferase) domain 1"/>
    <property type="match status" value="1"/>
</dbReference>
<dbReference type="InterPro" id="IPR050108">
    <property type="entry name" value="CDK"/>
</dbReference>
<dbReference type="InterPro" id="IPR011009">
    <property type="entry name" value="Kinase-like_dom_sf"/>
</dbReference>
<dbReference type="InterPro" id="IPR000719">
    <property type="entry name" value="Prot_kinase_dom"/>
</dbReference>
<dbReference type="InterPro" id="IPR017441">
    <property type="entry name" value="Protein_kinase_ATP_BS"/>
</dbReference>
<dbReference type="InterPro" id="IPR008271">
    <property type="entry name" value="Ser/Thr_kinase_AS"/>
</dbReference>
<dbReference type="PANTHER" id="PTHR24056">
    <property type="entry name" value="CELL DIVISION PROTEIN KINASE"/>
    <property type="match status" value="1"/>
</dbReference>
<dbReference type="PANTHER" id="PTHR24056:SF178">
    <property type="entry name" value="CYCLIN-DEPENDENT KINASE B2-2"/>
    <property type="match status" value="1"/>
</dbReference>
<dbReference type="Pfam" id="PF00069">
    <property type="entry name" value="Pkinase"/>
    <property type="match status" value="1"/>
</dbReference>
<dbReference type="SMART" id="SM00220">
    <property type="entry name" value="S_TKc"/>
    <property type="match status" value="1"/>
</dbReference>
<dbReference type="SUPFAM" id="SSF56112">
    <property type="entry name" value="Protein kinase-like (PK-like)"/>
    <property type="match status" value="1"/>
</dbReference>
<dbReference type="PROSITE" id="PS00107">
    <property type="entry name" value="PROTEIN_KINASE_ATP"/>
    <property type="match status" value="1"/>
</dbReference>
<dbReference type="PROSITE" id="PS50011">
    <property type="entry name" value="PROTEIN_KINASE_DOM"/>
    <property type="match status" value="1"/>
</dbReference>
<dbReference type="PROSITE" id="PS00108">
    <property type="entry name" value="PROTEIN_KINASE_ST"/>
    <property type="match status" value="1"/>
</dbReference>
<organism>
    <name type="scientific">Arabidopsis thaliana</name>
    <name type="common">Mouse-ear cress</name>
    <dbReference type="NCBI Taxonomy" id="3702"/>
    <lineage>
        <taxon>Eukaryota</taxon>
        <taxon>Viridiplantae</taxon>
        <taxon>Streptophyta</taxon>
        <taxon>Embryophyta</taxon>
        <taxon>Tracheophyta</taxon>
        <taxon>Spermatophyta</taxon>
        <taxon>Magnoliopsida</taxon>
        <taxon>eudicotyledons</taxon>
        <taxon>Gunneridae</taxon>
        <taxon>Pentapetalae</taxon>
        <taxon>rosids</taxon>
        <taxon>malvids</taxon>
        <taxon>Brassicales</taxon>
        <taxon>Brassicaceae</taxon>
        <taxon>Camelineae</taxon>
        <taxon>Arabidopsis</taxon>
    </lineage>
</organism>
<evidence type="ECO:0000250" key="1">
    <source>
        <dbReference type="UniProtKB" id="P24100"/>
    </source>
</evidence>
<evidence type="ECO:0000250" key="2">
    <source>
        <dbReference type="UniProtKB" id="Q9C9M7"/>
    </source>
</evidence>
<evidence type="ECO:0000255" key="3">
    <source>
        <dbReference type="PROSITE-ProRule" id="PRU00159"/>
    </source>
</evidence>
<evidence type="ECO:0000255" key="4">
    <source>
        <dbReference type="PROSITE-ProRule" id="PRU10027"/>
    </source>
</evidence>
<evidence type="ECO:0000269" key="5">
    <source>
    </source>
</evidence>
<evidence type="ECO:0000305" key="6"/>
<reference key="1">
    <citation type="journal article" date="2000" name="Nature">
        <title>Sequence and analysis of chromosome 1 of the plant Arabidopsis thaliana.</title>
        <authorList>
            <person name="Theologis A."/>
            <person name="Ecker J.R."/>
            <person name="Palm C.J."/>
            <person name="Federspiel N.A."/>
            <person name="Kaul S."/>
            <person name="White O."/>
            <person name="Alonso J."/>
            <person name="Altafi H."/>
            <person name="Araujo R."/>
            <person name="Bowman C.L."/>
            <person name="Brooks S.Y."/>
            <person name="Buehler E."/>
            <person name="Chan A."/>
            <person name="Chao Q."/>
            <person name="Chen H."/>
            <person name="Cheuk R.F."/>
            <person name="Chin C.W."/>
            <person name="Chung M.K."/>
            <person name="Conn L."/>
            <person name="Conway A.B."/>
            <person name="Conway A.R."/>
            <person name="Creasy T.H."/>
            <person name="Dewar K."/>
            <person name="Dunn P."/>
            <person name="Etgu P."/>
            <person name="Feldblyum T.V."/>
            <person name="Feng J.-D."/>
            <person name="Fong B."/>
            <person name="Fujii C.Y."/>
            <person name="Gill J.E."/>
            <person name="Goldsmith A.D."/>
            <person name="Haas B."/>
            <person name="Hansen N.F."/>
            <person name="Hughes B."/>
            <person name="Huizar L."/>
            <person name="Hunter J.L."/>
            <person name="Jenkins J."/>
            <person name="Johnson-Hopson C."/>
            <person name="Khan S."/>
            <person name="Khaykin E."/>
            <person name="Kim C.J."/>
            <person name="Koo H.L."/>
            <person name="Kremenetskaia I."/>
            <person name="Kurtz D.B."/>
            <person name="Kwan A."/>
            <person name="Lam B."/>
            <person name="Langin-Hooper S."/>
            <person name="Lee A."/>
            <person name="Lee J.M."/>
            <person name="Lenz C.A."/>
            <person name="Li J.H."/>
            <person name="Li Y.-P."/>
            <person name="Lin X."/>
            <person name="Liu S.X."/>
            <person name="Liu Z.A."/>
            <person name="Luros J.S."/>
            <person name="Maiti R."/>
            <person name="Marziali A."/>
            <person name="Militscher J."/>
            <person name="Miranda M."/>
            <person name="Nguyen M."/>
            <person name="Nierman W.C."/>
            <person name="Osborne B.I."/>
            <person name="Pai G."/>
            <person name="Peterson J."/>
            <person name="Pham P.K."/>
            <person name="Rizzo M."/>
            <person name="Rooney T."/>
            <person name="Rowley D."/>
            <person name="Sakano H."/>
            <person name="Salzberg S.L."/>
            <person name="Schwartz J.R."/>
            <person name="Shinn P."/>
            <person name="Southwick A.M."/>
            <person name="Sun H."/>
            <person name="Tallon L.J."/>
            <person name="Tambunga G."/>
            <person name="Toriumi M.J."/>
            <person name="Town C.D."/>
            <person name="Utterback T."/>
            <person name="Van Aken S."/>
            <person name="Vaysberg M."/>
            <person name="Vysotskaia V.S."/>
            <person name="Walker M."/>
            <person name="Wu D."/>
            <person name="Yu G."/>
            <person name="Fraser C.M."/>
            <person name="Venter J.C."/>
            <person name="Davis R.W."/>
        </authorList>
    </citation>
    <scope>NUCLEOTIDE SEQUENCE [LARGE SCALE GENOMIC DNA]</scope>
    <source>
        <strain>cv. Columbia</strain>
    </source>
</reference>
<reference key="2">
    <citation type="journal article" date="2017" name="Plant J.">
        <title>Araport11: a complete reannotation of the Arabidopsis thaliana reference genome.</title>
        <authorList>
            <person name="Cheng C.Y."/>
            <person name="Krishnakumar V."/>
            <person name="Chan A.P."/>
            <person name="Thibaud-Nissen F."/>
            <person name="Schobel S."/>
            <person name="Town C.D."/>
        </authorList>
    </citation>
    <scope>GENOME REANNOTATION</scope>
    <source>
        <strain>cv. Columbia</strain>
    </source>
</reference>
<reference key="3">
    <citation type="submission" date="2006-03" db="EMBL/GenBank/DDBJ databases">
        <title>Arabidopsis ORF clones.</title>
        <authorList>
            <person name="Shinn P."/>
            <person name="Chen H."/>
            <person name="Kim C.J."/>
            <person name="Ecker J.R."/>
        </authorList>
    </citation>
    <scope>NUCLEOTIDE SEQUENCE [LARGE SCALE MRNA]</scope>
    <source>
        <strain>cv. Columbia</strain>
    </source>
</reference>
<reference key="4">
    <citation type="submission" date="2006-07" db="EMBL/GenBank/DDBJ databases">
        <title>Large-scale analysis of RIKEN Arabidopsis full-length (RAFL) cDNAs.</title>
        <authorList>
            <person name="Totoki Y."/>
            <person name="Seki M."/>
            <person name="Ishida J."/>
            <person name="Nakajima M."/>
            <person name="Enju A."/>
            <person name="Kamiya A."/>
            <person name="Narusaka M."/>
            <person name="Shin-i T."/>
            <person name="Nakagawa M."/>
            <person name="Sakamoto N."/>
            <person name="Oishi K."/>
            <person name="Kohara Y."/>
            <person name="Kobayashi M."/>
            <person name="Toyoda A."/>
            <person name="Sakaki Y."/>
            <person name="Sakurai T."/>
            <person name="Iida K."/>
            <person name="Akiyama K."/>
            <person name="Satou M."/>
            <person name="Toyoda T."/>
            <person name="Konagaya A."/>
            <person name="Carninci P."/>
            <person name="Kawai J."/>
            <person name="Hayashizaki Y."/>
            <person name="Shinozaki K."/>
        </authorList>
    </citation>
    <scope>NUCLEOTIDE SEQUENCE [LARGE SCALE MRNA]</scope>
    <source>
        <strain>cv. Columbia</strain>
    </source>
</reference>
<reference key="5">
    <citation type="submission" date="2002-03" db="EMBL/GenBank/DDBJ databases">
        <title>Full-length cDNA from Arabidopsis thaliana.</title>
        <authorList>
            <person name="Brover V.V."/>
            <person name="Troukhan M.E."/>
            <person name="Alexandrov N.A."/>
            <person name="Lu Y.-P."/>
            <person name="Flavell R.B."/>
            <person name="Feldmann K.A."/>
        </authorList>
    </citation>
    <scope>NUCLEOTIDE SEQUENCE [LARGE SCALE MRNA]</scope>
</reference>
<reference key="6">
    <citation type="journal article" date="2001" name="J. Exp. Bot.">
        <title>Identification of novel cyclin-dependent kinases interacting with the CKS1 protein of Arabidopsis.</title>
        <authorList>
            <person name="Boudolf V."/>
            <person name="Rombauts S."/>
            <person name="Naudts M."/>
            <person name="Inze D."/>
            <person name="de Veylder L."/>
        </authorList>
    </citation>
    <scope>TISSUE SPECIFICITY</scope>
</reference>
<reference key="7">
    <citation type="journal article" date="2002" name="Plant Cell">
        <title>Genome-wide analysis of core cell cycle genes in Arabidopsis.</title>
        <authorList>
            <person name="Vandepoele K."/>
            <person name="Raes J."/>
            <person name="de Veylder L."/>
            <person name="Rouze P."/>
            <person name="Rombauts S."/>
            <person name="Inze D."/>
        </authorList>
    </citation>
    <scope>GENE FAMILY</scope>
    <scope>NOMENCLATURE</scope>
</reference>
<reference key="8">
    <citation type="journal article" date="2006" name="Annu. Rev. Genet.">
        <title>Cell cycle regulation in plant development.</title>
        <authorList>
            <person name="Inze D."/>
            <person name="de Veylder L."/>
        </authorList>
    </citation>
    <scope>REVIEW</scope>
</reference>
<proteinExistence type="evidence at protein level"/>
<name>CKB22_ARATH</name>
<keyword id="KW-0067">ATP-binding</keyword>
<keyword id="KW-0418">Kinase</keyword>
<keyword id="KW-0547">Nucleotide-binding</keyword>
<keyword id="KW-0597">Phosphoprotein</keyword>
<keyword id="KW-1185">Reference proteome</keyword>
<keyword id="KW-0723">Serine/threonine-protein kinase</keyword>
<keyword id="KW-0808">Transferase</keyword>
<sequence>MDNNGVKPAVSAMEAFEKLEKVGEGTYGKVYRAREKATGMIVALKKTRLHEDEEGVPPTTLREISILRMLARDPHIVRLMDVKQGINKEGKTVLYLVFEYVDTDLKKFIRSFRQAGQNIPQNTVKCLMYQLCKGMAFCHGHGVLHRDLKPHNLLMDRKTMTLKIADLGLARAFTLPMKKYTHEILTLWYRAPEVLLGATHYSTGVDMWSVGCIFAELVTKQAIFAGDSELQQLLRIFRLLGTPNEEVWPGVSKLKDWHEYPQWKPLSLSTAVPNLDEAGLDLLSKMLEYEPAKRISAKKAMEHPYFDDLPDKSSL</sequence>